<feature type="chain" id="PRO_1000200351" description="tRNA uridine(34) hydroxylase">
    <location>
        <begin position="1"/>
        <end position="282"/>
    </location>
</feature>
<feature type="domain" description="Rhodanese" evidence="1">
    <location>
        <begin position="128"/>
        <end position="222"/>
    </location>
</feature>
<feature type="active site" description="Cysteine persulfide intermediate" evidence="1">
    <location>
        <position position="182"/>
    </location>
</feature>
<evidence type="ECO:0000255" key="1">
    <source>
        <dbReference type="HAMAP-Rule" id="MF_00469"/>
    </source>
</evidence>
<dbReference type="EC" id="1.14.-.-" evidence="1"/>
<dbReference type="EMBL" id="CU633749">
    <property type="protein sequence ID" value="CAQ68782.1"/>
    <property type="molecule type" value="Genomic_DNA"/>
</dbReference>
<dbReference type="RefSeq" id="WP_012352119.1">
    <property type="nucleotide sequence ID" value="NC_010528.1"/>
</dbReference>
<dbReference type="SMR" id="B3R3A1"/>
<dbReference type="GeneID" id="29762651"/>
<dbReference type="KEGG" id="cti:RALTA_A0810"/>
<dbReference type="eggNOG" id="COG1054">
    <property type="taxonomic scope" value="Bacteria"/>
</dbReference>
<dbReference type="HOGENOM" id="CLU_038878_0_1_4"/>
<dbReference type="BioCyc" id="CTAI977880:RALTA_RS03910-MONOMER"/>
<dbReference type="Proteomes" id="UP000001692">
    <property type="component" value="Chromosome 1"/>
</dbReference>
<dbReference type="GO" id="GO:0016705">
    <property type="term" value="F:oxidoreductase activity, acting on paired donors, with incorporation or reduction of molecular oxygen"/>
    <property type="evidence" value="ECO:0007669"/>
    <property type="project" value="UniProtKB-UniRule"/>
</dbReference>
<dbReference type="GO" id="GO:0006400">
    <property type="term" value="P:tRNA modification"/>
    <property type="evidence" value="ECO:0007669"/>
    <property type="project" value="UniProtKB-UniRule"/>
</dbReference>
<dbReference type="CDD" id="cd01518">
    <property type="entry name" value="RHOD_YceA"/>
    <property type="match status" value="1"/>
</dbReference>
<dbReference type="Gene3D" id="3.30.70.100">
    <property type="match status" value="1"/>
</dbReference>
<dbReference type="Gene3D" id="3.40.250.10">
    <property type="entry name" value="Rhodanese-like domain"/>
    <property type="match status" value="1"/>
</dbReference>
<dbReference type="HAMAP" id="MF_00469">
    <property type="entry name" value="TrhO"/>
    <property type="match status" value="1"/>
</dbReference>
<dbReference type="InterPro" id="IPR001763">
    <property type="entry name" value="Rhodanese-like_dom"/>
</dbReference>
<dbReference type="InterPro" id="IPR036873">
    <property type="entry name" value="Rhodanese-like_dom_sf"/>
</dbReference>
<dbReference type="InterPro" id="IPR020936">
    <property type="entry name" value="TrhO"/>
</dbReference>
<dbReference type="InterPro" id="IPR040503">
    <property type="entry name" value="TRHO_N"/>
</dbReference>
<dbReference type="NCBIfam" id="NF003703">
    <property type="entry name" value="PRK05320.1"/>
    <property type="match status" value="1"/>
</dbReference>
<dbReference type="PANTHER" id="PTHR43268:SF3">
    <property type="entry name" value="RHODANESE-LIKE DOMAIN-CONTAINING PROTEIN 7-RELATED"/>
    <property type="match status" value="1"/>
</dbReference>
<dbReference type="PANTHER" id="PTHR43268">
    <property type="entry name" value="THIOSULFATE SULFURTRANSFERASE/RHODANESE-LIKE DOMAIN-CONTAINING PROTEIN 2"/>
    <property type="match status" value="1"/>
</dbReference>
<dbReference type="Pfam" id="PF00581">
    <property type="entry name" value="Rhodanese"/>
    <property type="match status" value="1"/>
</dbReference>
<dbReference type="Pfam" id="PF17773">
    <property type="entry name" value="UPF0176_N"/>
    <property type="match status" value="1"/>
</dbReference>
<dbReference type="SMART" id="SM00450">
    <property type="entry name" value="RHOD"/>
    <property type="match status" value="1"/>
</dbReference>
<dbReference type="SUPFAM" id="SSF52821">
    <property type="entry name" value="Rhodanese/Cell cycle control phosphatase"/>
    <property type="match status" value="1"/>
</dbReference>
<dbReference type="PROSITE" id="PS50206">
    <property type="entry name" value="RHODANESE_3"/>
    <property type="match status" value="1"/>
</dbReference>
<organism>
    <name type="scientific">Cupriavidus taiwanensis (strain DSM 17343 / BCRC 17206 / CCUG 44338 / CIP 107171 / LMG 19424 / R1)</name>
    <name type="common">Ralstonia taiwanensis (strain LMG 19424)</name>
    <dbReference type="NCBI Taxonomy" id="977880"/>
    <lineage>
        <taxon>Bacteria</taxon>
        <taxon>Pseudomonadati</taxon>
        <taxon>Pseudomonadota</taxon>
        <taxon>Betaproteobacteria</taxon>
        <taxon>Burkholderiales</taxon>
        <taxon>Burkholderiaceae</taxon>
        <taxon>Cupriavidus</taxon>
    </lineage>
</organism>
<protein>
    <recommendedName>
        <fullName evidence="1">tRNA uridine(34) hydroxylase</fullName>
        <ecNumber evidence="1">1.14.-.-</ecNumber>
    </recommendedName>
    <alternativeName>
        <fullName evidence="1">tRNA hydroxylation protein O</fullName>
    </alternativeName>
</protein>
<gene>
    <name evidence="1" type="primary">trhO</name>
    <name type="ordered locus">RALTA_A0810</name>
</gene>
<comment type="function">
    <text evidence="1">Catalyzes oxygen-dependent 5-hydroxyuridine (ho5U) modification at position 34 in tRNAs.</text>
</comment>
<comment type="catalytic activity">
    <reaction evidence="1">
        <text>uridine(34) in tRNA + AH2 + O2 = 5-hydroxyuridine(34) in tRNA + A + H2O</text>
        <dbReference type="Rhea" id="RHEA:64224"/>
        <dbReference type="Rhea" id="RHEA-COMP:11727"/>
        <dbReference type="Rhea" id="RHEA-COMP:13381"/>
        <dbReference type="ChEBI" id="CHEBI:13193"/>
        <dbReference type="ChEBI" id="CHEBI:15377"/>
        <dbReference type="ChEBI" id="CHEBI:15379"/>
        <dbReference type="ChEBI" id="CHEBI:17499"/>
        <dbReference type="ChEBI" id="CHEBI:65315"/>
        <dbReference type="ChEBI" id="CHEBI:136877"/>
    </reaction>
</comment>
<comment type="similarity">
    <text evidence="1">Belongs to the TrhO family.</text>
</comment>
<name>TRHO_CUPTR</name>
<accession>B3R3A1</accession>
<keyword id="KW-0560">Oxidoreductase</keyword>
<keyword id="KW-0819">tRNA processing</keyword>
<sequence>MQIVNISAYKFVSLDDIETLRPAMRERCEAAGLKGTILLAPEGINLFLAGPREAIDGFMAWLHADARFADIAPKESLSENQPFKRMLVRAKKEIITMKMPLIRPEAGRAPSVRPADLKRWLDQGHDDEGRPVVMLDTRNDFEVAVGTFENAVEYDIAKFSEFPDAVAAHKAELDGKTVVSFCTGGIRCEKAAIHMQEVGIERVYQLEGGILKYFEEVGGSHYRGDCFVFDYRTALNPSLEPAGPKQCFACRAVVTPEQQQSPHYVVGKSCPHCIGGKDRAAA</sequence>
<proteinExistence type="inferred from homology"/>
<reference key="1">
    <citation type="journal article" date="2008" name="Genome Res.">
        <title>Genome sequence of the beta-rhizobium Cupriavidus taiwanensis and comparative genomics of rhizobia.</title>
        <authorList>
            <person name="Amadou C."/>
            <person name="Pascal G."/>
            <person name="Mangenot S."/>
            <person name="Glew M."/>
            <person name="Bontemps C."/>
            <person name="Capela D."/>
            <person name="Carrere S."/>
            <person name="Cruveiller S."/>
            <person name="Dossat C."/>
            <person name="Lajus A."/>
            <person name="Marchetti M."/>
            <person name="Poinsot V."/>
            <person name="Rouy Z."/>
            <person name="Servin B."/>
            <person name="Saad M."/>
            <person name="Schenowitz C."/>
            <person name="Barbe V."/>
            <person name="Batut J."/>
            <person name="Medigue C."/>
            <person name="Masson-Boivin C."/>
        </authorList>
    </citation>
    <scope>NUCLEOTIDE SEQUENCE [LARGE SCALE GENOMIC DNA]</scope>
    <source>
        <strain>DSM 17343 / BCRC 17206 / CCUG 44338 / CIP 107171 / LMG 19424 / R1</strain>
    </source>
</reference>